<gene>
    <name type="primary">flaF</name>
    <name type="ordered locus">MJ0897</name>
</gene>
<proteinExistence type="inferred from homology"/>
<keyword id="KW-0007">Acetylation</keyword>
<keyword id="KW-0974">Archaeal flagellum</keyword>
<keyword id="KW-0449">Lipoprotein</keyword>
<keyword id="KW-0472">Membrane</keyword>
<keyword id="KW-1185">Reference proteome</keyword>
<keyword id="KW-0732">Signal</keyword>
<protein>
    <recommendedName>
        <fullName>Putative flagella-related protein F</fullName>
    </recommendedName>
</protein>
<dbReference type="EMBL" id="L77117">
    <property type="protein sequence ID" value="AAB98900.1"/>
    <property type="molecule type" value="Genomic_DNA"/>
</dbReference>
<dbReference type="PIR" id="A64412">
    <property type="entry name" value="A64412"/>
</dbReference>
<dbReference type="RefSeq" id="WP_010870411.1">
    <property type="nucleotide sequence ID" value="NC_000909.1"/>
</dbReference>
<dbReference type="SMR" id="Q58307"/>
<dbReference type="FunCoup" id="Q58307">
    <property type="interactions" value="2"/>
</dbReference>
<dbReference type="STRING" id="243232.MJ_0897"/>
<dbReference type="PaxDb" id="243232-MJ_0897"/>
<dbReference type="EnsemblBacteria" id="AAB98900">
    <property type="protein sequence ID" value="AAB98900"/>
    <property type="gene ID" value="MJ_0897"/>
</dbReference>
<dbReference type="GeneID" id="1451786"/>
<dbReference type="KEGG" id="mja:MJ_0897"/>
<dbReference type="eggNOG" id="arCOG01824">
    <property type="taxonomic scope" value="Archaea"/>
</dbReference>
<dbReference type="HOGENOM" id="CLU_1881047_0_0_2"/>
<dbReference type="InParanoid" id="Q58307"/>
<dbReference type="OrthoDB" id="63667at2157"/>
<dbReference type="PhylomeDB" id="Q58307"/>
<dbReference type="Proteomes" id="UP000000805">
    <property type="component" value="Chromosome"/>
</dbReference>
<dbReference type="GO" id="GO:0097589">
    <property type="term" value="C:archaeal-type flagellum"/>
    <property type="evidence" value="ECO:0007669"/>
    <property type="project" value="UniProtKB-SubCell"/>
</dbReference>
<dbReference type="GO" id="GO:0016020">
    <property type="term" value="C:membrane"/>
    <property type="evidence" value="ECO:0007669"/>
    <property type="project" value="UniProtKB-SubCell"/>
</dbReference>
<dbReference type="GO" id="GO:0005198">
    <property type="term" value="F:structural molecule activity"/>
    <property type="evidence" value="ECO:0007669"/>
    <property type="project" value="InterPro"/>
</dbReference>
<dbReference type="GO" id="GO:0097588">
    <property type="term" value="P:archaeal or bacterial-type flagellum-dependent cell motility"/>
    <property type="evidence" value="ECO:0007669"/>
    <property type="project" value="InterPro"/>
</dbReference>
<dbReference type="InterPro" id="IPR002774">
    <property type="entry name" value="Flagellin_arc"/>
</dbReference>
<dbReference type="PANTHER" id="PTHR42200:SF2">
    <property type="entry name" value="ARCHAEAL FLAGELLA-RELATED PROTEIN F"/>
    <property type="match status" value="1"/>
</dbReference>
<dbReference type="PANTHER" id="PTHR42200">
    <property type="entry name" value="ARCHAEAL FLAGELLA-RELATED PROTEIN F-RELATED"/>
    <property type="match status" value="1"/>
</dbReference>
<organism>
    <name type="scientific">Methanocaldococcus jannaschii (strain ATCC 43067 / DSM 2661 / JAL-1 / JCM 10045 / NBRC 100440)</name>
    <name type="common">Methanococcus jannaschii</name>
    <dbReference type="NCBI Taxonomy" id="243232"/>
    <lineage>
        <taxon>Archaea</taxon>
        <taxon>Methanobacteriati</taxon>
        <taxon>Methanobacteriota</taxon>
        <taxon>Methanomada group</taxon>
        <taxon>Methanococci</taxon>
        <taxon>Methanococcales</taxon>
        <taxon>Methanocaldococcaceae</taxon>
        <taxon>Methanocaldococcus</taxon>
    </lineage>
</organism>
<comment type="subcellular location">
    <subcellularLocation>
        <location evidence="2">Archaeal flagellum</location>
    </subcellularLocation>
    <subcellularLocation>
        <location evidence="2">Membrane</location>
        <topology evidence="2">Lipid-anchor</topology>
    </subcellularLocation>
</comment>
<comment type="similarity">
    <text evidence="2">To M.voltae FlaF.</text>
</comment>
<feature type="signal peptide" evidence="1">
    <location>
        <begin position="1"/>
        <end position="18"/>
    </location>
</feature>
<feature type="chain" id="PRO_0000021270" description="Putative flagella-related protein F">
    <location>
        <begin position="19"/>
        <end position="139"/>
    </location>
</feature>
<feature type="modified residue" description="N-acetylcysteine" evidence="1">
    <location>
        <position position="19"/>
    </location>
</feature>
<feature type="lipid moiety-binding region" description="S-archaeol cysteine" evidence="1">
    <location>
        <position position="19"/>
    </location>
</feature>
<accession>Q58307</accession>
<sequence>MGFSSVVGATVMIIALLVCGAYLYVTMDSYYENVDEAYTTYYSHVHAKLNEKLVITDVKSSTSQTNITIYNNGSVVVEPDKFTILFDGTVVPEENISYYPKLKKYLVPLDSITIVVNWTQPSRICIVSDNGNKYFYSLT</sequence>
<evidence type="ECO:0000255" key="1"/>
<evidence type="ECO:0000305" key="2"/>
<name>FLAF_METJA</name>
<reference key="1">
    <citation type="journal article" date="1996" name="Science">
        <title>Complete genome sequence of the methanogenic archaeon, Methanococcus jannaschii.</title>
        <authorList>
            <person name="Bult C.J."/>
            <person name="White O."/>
            <person name="Olsen G.J."/>
            <person name="Zhou L."/>
            <person name="Fleischmann R.D."/>
            <person name="Sutton G.G."/>
            <person name="Blake J.A."/>
            <person name="FitzGerald L.M."/>
            <person name="Clayton R.A."/>
            <person name="Gocayne J.D."/>
            <person name="Kerlavage A.R."/>
            <person name="Dougherty B.A."/>
            <person name="Tomb J.-F."/>
            <person name="Adams M.D."/>
            <person name="Reich C.I."/>
            <person name="Overbeek R."/>
            <person name="Kirkness E.F."/>
            <person name="Weinstock K.G."/>
            <person name="Merrick J.M."/>
            <person name="Glodek A."/>
            <person name="Scott J.L."/>
            <person name="Geoghagen N.S.M."/>
            <person name="Weidman J.F."/>
            <person name="Fuhrmann J.L."/>
            <person name="Nguyen D."/>
            <person name="Utterback T.R."/>
            <person name="Kelley J.M."/>
            <person name="Peterson J.D."/>
            <person name="Sadow P.W."/>
            <person name="Hanna M.C."/>
            <person name="Cotton M.D."/>
            <person name="Roberts K.M."/>
            <person name="Hurst M.A."/>
            <person name="Kaine B.P."/>
            <person name="Borodovsky M."/>
            <person name="Klenk H.-P."/>
            <person name="Fraser C.M."/>
            <person name="Smith H.O."/>
            <person name="Woese C.R."/>
            <person name="Venter J.C."/>
        </authorList>
    </citation>
    <scope>NUCLEOTIDE SEQUENCE [LARGE SCALE GENOMIC DNA]</scope>
    <source>
        <strain>ATCC 43067 / DSM 2661 / JAL-1 / JCM 10045 / NBRC 100440</strain>
    </source>
</reference>